<feature type="chain" id="PRO_0000348982" description="Heme A synthase">
    <location>
        <begin position="1"/>
        <end position="305"/>
    </location>
</feature>
<feature type="topological domain" description="Cytoplasmic" evidence="1">
    <location>
        <begin position="1"/>
        <end position="6"/>
    </location>
</feature>
<feature type="transmembrane region" description="Helical" evidence="1">
    <location>
        <begin position="7"/>
        <end position="27"/>
    </location>
</feature>
<feature type="topological domain" description="Extracellular" evidence="1">
    <location>
        <begin position="28"/>
        <end position="63"/>
    </location>
</feature>
<feature type="transmembrane region" description="Helical" evidence="1">
    <location>
        <begin position="64"/>
        <end position="84"/>
    </location>
</feature>
<feature type="topological domain" description="Cytoplasmic" evidence="1">
    <location>
        <begin position="85"/>
        <end position="92"/>
    </location>
</feature>
<feature type="transmembrane region" description="Helical" evidence="1">
    <location>
        <begin position="93"/>
        <end position="113"/>
    </location>
</feature>
<feature type="topological domain" description="Extracellular" evidence="1">
    <location>
        <begin position="114"/>
        <end position="122"/>
    </location>
</feature>
<feature type="transmembrane region" description="Helical" evidence="1">
    <location>
        <begin position="123"/>
        <end position="143"/>
    </location>
</feature>
<feature type="topological domain" description="Cytoplasmic" evidence="1">
    <location>
        <begin position="144"/>
        <end position="160"/>
    </location>
</feature>
<feature type="transmembrane region" description="Helical" evidence="1">
    <location>
        <begin position="161"/>
        <end position="181"/>
    </location>
</feature>
<feature type="topological domain" description="Extracellular" evidence="1">
    <location>
        <begin position="182"/>
        <end position="212"/>
    </location>
</feature>
<feature type="transmembrane region" description="Helical" evidence="1">
    <location>
        <begin position="213"/>
        <end position="233"/>
    </location>
</feature>
<feature type="topological domain" description="Cytoplasmic" evidence="1">
    <location>
        <begin position="234"/>
        <end position="240"/>
    </location>
</feature>
<feature type="transmembrane region" description="Helical" evidence="1">
    <location>
        <begin position="241"/>
        <end position="261"/>
    </location>
</feature>
<feature type="topological domain" description="Extracellular" evidence="1">
    <location>
        <begin position="262"/>
        <end position="271"/>
    </location>
</feature>
<feature type="transmembrane region" description="Helical" evidence="1">
    <location>
        <begin position="272"/>
        <end position="292"/>
    </location>
</feature>
<feature type="topological domain" description="Cytoplasmic" evidence="1">
    <location>
        <begin position="293"/>
        <end position="305"/>
    </location>
</feature>
<feature type="active site" evidence="1">
    <location>
        <position position="59"/>
    </location>
</feature>
<feature type="binding site" description="axial binding residue" evidence="1">
    <location>
        <position position="62"/>
    </location>
    <ligand>
        <name>heme o</name>
        <dbReference type="ChEBI" id="CHEBI:24480"/>
    </ligand>
    <ligandPart>
        <name>Fe</name>
        <dbReference type="ChEBI" id="CHEBI:18248"/>
    </ligandPart>
</feature>
<feature type="binding site" description="axial binding residue" evidence="1">
    <location>
        <position position="124"/>
    </location>
    <ligand>
        <name>heme o</name>
        <dbReference type="ChEBI" id="CHEBI:24480"/>
    </ligand>
    <ligandPart>
        <name>Fe</name>
        <dbReference type="ChEBI" id="CHEBI:18248"/>
    </ligandPart>
</feature>
<feature type="binding site" description="axial binding residue" evidence="1">
    <location>
        <position position="214"/>
    </location>
    <ligand>
        <name>heme b</name>
        <dbReference type="ChEBI" id="CHEBI:60344"/>
    </ligand>
    <ligandPart>
        <name>Fe</name>
        <dbReference type="ChEBI" id="CHEBI:18248"/>
    </ligandPart>
</feature>
<feature type="binding site" description="axial binding residue" evidence="1">
    <location>
        <position position="276"/>
    </location>
    <ligand>
        <name>heme b</name>
        <dbReference type="ChEBI" id="CHEBI:60344"/>
    </ligand>
    <ligandPart>
        <name>Fe</name>
        <dbReference type="ChEBI" id="CHEBI:18248"/>
    </ligandPart>
</feature>
<feature type="disulfide bond" description="Essential for catalytic activity" evidence="1">
    <location>
        <begin position="35"/>
        <end position="42"/>
    </location>
</feature>
<gene>
    <name evidence="1" type="primary">ctaA</name>
    <name type="ordered locus">lmo2058</name>
</gene>
<accession>Q8Y5K2</accession>
<reference key="1">
    <citation type="journal article" date="2001" name="Science">
        <title>Comparative genomics of Listeria species.</title>
        <authorList>
            <person name="Glaser P."/>
            <person name="Frangeul L."/>
            <person name="Buchrieser C."/>
            <person name="Rusniok C."/>
            <person name="Amend A."/>
            <person name="Baquero F."/>
            <person name="Berche P."/>
            <person name="Bloecker H."/>
            <person name="Brandt P."/>
            <person name="Chakraborty T."/>
            <person name="Charbit A."/>
            <person name="Chetouani F."/>
            <person name="Couve E."/>
            <person name="de Daruvar A."/>
            <person name="Dehoux P."/>
            <person name="Domann E."/>
            <person name="Dominguez-Bernal G."/>
            <person name="Duchaud E."/>
            <person name="Durant L."/>
            <person name="Dussurget O."/>
            <person name="Entian K.-D."/>
            <person name="Fsihi H."/>
            <person name="Garcia-del Portillo F."/>
            <person name="Garrido P."/>
            <person name="Gautier L."/>
            <person name="Goebel W."/>
            <person name="Gomez-Lopez N."/>
            <person name="Hain T."/>
            <person name="Hauf J."/>
            <person name="Jackson D."/>
            <person name="Jones L.-M."/>
            <person name="Kaerst U."/>
            <person name="Kreft J."/>
            <person name="Kuhn M."/>
            <person name="Kunst F."/>
            <person name="Kurapkat G."/>
            <person name="Madueno E."/>
            <person name="Maitournam A."/>
            <person name="Mata Vicente J."/>
            <person name="Ng E."/>
            <person name="Nedjari H."/>
            <person name="Nordsiek G."/>
            <person name="Novella S."/>
            <person name="de Pablos B."/>
            <person name="Perez-Diaz J.-C."/>
            <person name="Purcell R."/>
            <person name="Remmel B."/>
            <person name="Rose M."/>
            <person name="Schlueter T."/>
            <person name="Simoes N."/>
            <person name="Tierrez A."/>
            <person name="Vazquez-Boland J.-A."/>
            <person name="Voss H."/>
            <person name="Wehland J."/>
            <person name="Cossart P."/>
        </authorList>
    </citation>
    <scope>NUCLEOTIDE SEQUENCE [LARGE SCALE GENOMIC DNA]</scope>
    <source>
        <strain>ATCC BAA-679 / EGD-e</strain>
    </source>
</reference>
<protein>
    <recommendedName>
        <fullName evidence="1">Heme A synthase</fullName>
        <shortName evidence="1">HAS</shortName>
        <ecNumber evidence="1">1.17.99.9</ecNumber>
    </recommendedName>
    <alternativeName>
        <fullName evidence="1">Cytochrome aa3-controlling protein</fullName>
    </alternativeName>
</protein>
<comment type="function">
    <text evidence="1">Catalyzes the conversion of heme O to heme A by two successive hydroxylations of the methyl group at C8. The first hydroxylation forms heme I, the second hydroxylation results in an unstable dihydroxymethyl group, which spontaneously dehydrates, resulting in the formyl group of heme A.</text>
</comment>
<comment type="catalytic activity">
    <reaction evidence="1">
        <text>Fe(II)-heme o + 2 A + H2O = Fe(II)-heme a + 2 AH2</text>
        <dbReference type="Rhea" id="RHEA:63388"/>
        <dbReference type="ChEBI" id="CHEBI:13193"/>
        <dbReference type="ChEBI" id="CHEBI:15377"/>
        <dbReference type="ChEBI" id="CHEBI:17499"/>
        <dbReference type="ChEBI" id="CHEBI:60530"/>
        <dbReference type="ChEBI" id="CHEBI:61715"/>
        <dbReference type="EC" id="1.17.99.9"/>
    </reaction>
    <physiologicalReaction direction="left-to-right" evidence="1">
        <dbReference type="Rhea" id="RHEA:63389"/>
    </physiologicalReaction>
</comment>
<comment type="cofactor">
    <cofactor evidence="1">
        <name>heme b</name>
        <dbReference type="ChEBI" id="CHEBI:60344"/>
    </cofactor>
</comment>
<comment type="pathway">
    <text evidence="1">Porphyrin-containing compound metabolism; heme A biosynthesis; heme A from heme O: step 1/1.</text>
</comment>
<comment type="subunit">
    <text evidence="1">Interacts with CtaB.</text>
</comment>
<comment type="subcellular location">
    <subcellularLocation>
        <location evidence="1">Cell membrane</location>
        <topology evidence="1">Multi-pass membrane protein</topology>
    </subcellularLocation>
</comment>
<comment type="domain">
    <text evidence="1">The N-half (TM1-TM4) and C-half (TM5-TM8) domains are connected by an intracellular loop. Each domain is formed from four-helix bundles and they align in a pseudo twofold symmetry manner. The N-half domain is the substrate-heme O binding domain and the C-half domain is the cofactor heme B binding domain.</text>
</comment>
<comment type="domain">
    <text evidence="1">The cysteines of disulfide bond Cys-35 and Cys-42 may be involved in transfer of reducing equivalents from quinol in the membrane to the active site of the enzyme.</text>
</comment>
<comment type="similarity">
    <text evidence="1">Belongs to the COX15/CtaA family. Type 1 subfamily.</text>
</comment>
<keyword id="KW-1003">Cell membrane</keyword>
<keyword id="KW-1015">Disulfide bond</keyword>
<keyword id="KW-0350">Heme biosynthesis</keyword>
<keyword id="KW-0408">Iron</keyword>
<keyword id="KW-0472">Membrane</keyword>
<keyword id="KW-0479">Metal-binding</keyword>
<keyword id="KW-0560">Oxidoreductase</keyword>
<keyword id="KW-1185">Reference proteome</keyword>
<keyword id="KW-0812">Transmembrane</keyword>
<keyword id="KW-1133">Transmembrane helix</keyword>
<sequence length="305" mass="34553">MKKFLKVWSVLTIICMTVVVFGGALVTKTGSADGCGNSWPLCNGQLVRLTDVTPEKLIEFMHRMTTGISSIFVIVLAICAWIYMKNRRETKPLAIIAVLFLIIQALMGMAAVVWGQNPYIMALHFGISIICYASIVLLALMIFEVDRKFDARNLVMGTKLRVNIYALTIYTYLAVYTGALVRHEKASMAVPVWPFENGHFIMPTSVQDYVQYFHRLAAFILIVWLLYVTWLVFRDYRRYRVLTFSMVLSLVFIALQAVTGALSVYTGVNLYIALAHSLIITMLFALLCYLCLLASRSKSNRLRIK</sequence>
<dbReference type="EC" id="1.17.99.9" evidence="1"/>
<dbReference type="EMBL" id="AL591982">
    <property type="protein sequence ID" value="CAD00136.1"/>
    <property type="molecule type" value="Genomic_DNA"/>
</dbReference>
<dbReference type="PIR" id="AB1332">
    <property type="entry name" value="AB1332"/>
</dbReference>
<dbReference type="RefSeq" id="NP_465582.1">
    <property type="nucleotide sequence ID" value="NC_003210.1"/>
</dbReference>
<dbReference type="RefSeq" id="WP_003731964.1">
    <property type="nucleotide sequence ID" value="NZ_CP149495.1"/>
</dbReference>
<dbReference type="SMR" id="Q8Y5K2"/>
<dbReference type="STRING" id="169963.gene:17594743"/>
<dbReference type="PaxDb" id="169963-lmo2058"/>
<dbReference type="DNASU" id="984460"/>
<dbReference type="EnsemblBacteria" id="CAD00136">
    <property type="protein sequence ID" value="CAD00136"/>
    <property type="gene ID" value="CAD00136"/>
</dbReference>
<dbReference type="GeneID" id="984460"/>
<dbReference type="KEGG" id="lmo:lmo2058"/>
<dbReference type="PATRIC" id="fig|169963.11.peg.2106"/>
<dbReference type="eggNOG" id="COG1612">
    <property type="taxonomic scope" value="Bacteria"/>
</dbReference>
<dbReference type="HOGENOM" id="CLU_041525_3_1_9"/>
<dbReference type="OrthoDB" id="9816428at2"/>
<dbReference type="PhylomeDB" id="Q8Y5K2"/>
<dbReference type="BioCyc" id="LMON169963:LMO2058-MONOMER"/>
<dbReference type="UniPathway" id="UPA00269">
    <property type="reaction ID" value="UER00713"/>
</dbReference>
<dbReference type="Proteomes" id="UP000000817">
    <property type="component" value="Chromosome"/>
</dbReference>
<dbReference type="GO" id="GO:0005886">
    <property type="term" value="C:plasma membrane"/>
    <property type="evidence" value="ECO:0007669"/>
    <property type="project" value="UniProtKB-SubCell"/>
</dbReference>
<dbReference type="GO" id="GO:0046872">
    <property type="term" value="F:metal ion binding"/>
    <property type="evidence" value="ECO:0007669"/>
    <property type="project" value="UniProtKB-KW"/>
</dbReference>
<dbReference type="GO" id="GO:0016653">
    <property type="term" value="F:oxidoreductase activity, acting on NAD(P)H, heme protein as acceptor"/>
    <property type="evidence" value="ECO:0007669"/>
    <property type="project" value="InterPro"/>
</dbReference>
<dbReference type="GO" id="GO:0006784">
    <property type="term" value="P:heme A biosynthetic process"/>
    <property type="evidence" value="ECO:0007669"/>
    <property type="project" value="UniProtKB-UniRule"/>
</dbReference>
<dbReference type="HAMAP" id="MF_01664">
    <property type="entry name" value="HemeA_synth_type1"/>
    <property type="match status" value="1"/>
</dbReference>
<dbReference type="InterPro" id="IPR003780">
    <property type="entry name" value="COX15/CtaA_fam"/>
</dbReference>
<dbReference type="InterPro" id="IPR050450">
    <property type="entry name" value="COX15/CtaA_HemeA_synthase"/>
</dbReference>
<dbReference type="InterPro" id="IPR023755">
    <property type="entry name" value="HemeA_Synthase_type1"/>
</dbReference>
<dbReference type="PANTHER" id="PTHR35457">
    <property type="entry name" value="HEME A SYNTHASE"/>
    <property type="match status" value="1"/>
</dbReference>
<dbReference type="PANTHER" id="PTHR35457:SF1">
    <property type="entry name" value="HEME A SYNTHASE"/>
    <property type="match status" value="1"/>
</dbReference>
<dbReference type="Pfam" id="PF02628">
    <property type="entry name" value="COX15-CtaA"/>
    <property type="match status" value="1"/>
</dbReference>
<proteinExistence type="inferred from homology"/>
<organism>
    <name type="scientific">Listeria monocytogenes serovar 1/2a (strain ATCC BAA-679 / EGD-e)</name>
    <dbReference type="NCBI Taxonomy" id="169963"/>
    <lineage>
        <taxon>Bacteria</taxon>
        <taxon>Bacillati</taxon>
        <taxon>Bacillota</taxon>
        <taxon>Bacilli</taxon>
        <taxon>Bacillales</taxon>
        <taxon>Listeriaceae</taxon>
        <taxon>Listeria</taxon>
    </lineage>
</organism>
<name>CTAA_LISMO</name>
<evidence type="ECO:0000255" key="1">
    <source>
        <dbReference type="HAMAP-Rule" id="MF_01664"/>
    </source>
</evidence>